<comment type="similarity">
    <text evidence="1">Belongs to the UPF0398 family.</text>
</comment>
<sequence>MKVLAVTGYKPFELGIFKQDDQALVYIKKAIETRLRSFIDEGLEWILISGQLGTELWAAETAYDLREEYPELKVAVITPFYGQEEKWKEPNKEMYEAVLAQADYEESLTHRPYESPLQFRQKNAFFIEKSDALLLLYDPEMEGSPKYMLQQAEKRRETDGYPIYSITMDDLRAAVEEEDFFT</sequence>
<organism>
    <name type="scientific">Bacillus velezensis (strain DSM 23117 / BGSC 10A6 / LMG 26770 / FZB42)</name>
    <name type="common">Bacillus amyloliquefaciens subsp. plantarum</name>
    <dbReference type="NCBI Taxonomy" id="326423"/>
    <lineage>
        <taxon>Bacteria</taxon>
        <taxon>Bacillati</taxon>
        <taxon>Bacillota</taxon>
        <taxon>Bacilli</taxon>
        <taxon>Bacillales</taxon>
        <taxon>Bacillaceae</taxon>
        <taxon>Bacillus</taxon>
        <taxon>Bacillus amyloliquefaciens group</taxon>
    </lineage>
</organism>
<evidence type="ECO:0000255" key="1">
    <source>
        <dbReference type="HAMAP-Rule" id="MF_01575"/>
    </source>
</evidence>
<proteinExistence type="inferred from homology"/>
<gene>
    <name type="ordered locus">RBAM_020340</name>
</gene>
<protein>
    <recommendedName>
        <fullName evidence="1">UPF0398 protein RBAM_020340</fullName>
    </recommendedName>
</protein>
<reference key="1">
    <citation type="journal article" date="2007" name="Nat. Biotechnol.">
        <title>Comparative analysis of the complete genome sequence of the plant growth-promoting bacterium Bacillus amyloliquefaciens FZB42.</title>
        <authorList>
            <person name="Chen X.H."/>
            <person name="Koumoutsi A."/>
            <person name="Scholz R."/>
            <person name="Eisenreich A."/>
            <person name="Schneider K."/>
            <person name="Heinemeyer I."/>
            <person name="Morgenstern B."/>
            <person name="Voss B."/>
            <person name="Hess W.R."/>
            <person name="Reva O."/>
            <person name="Junge H."/>
            <person name="Voigt B."/>
            <person name="Jungblut P.R."/>
            <person name="Vater J."/>
            <person name="Suessmuth R."/>
            <person name="Liesegang H."/>
            <person name="Strittmatter A."/>
            <person name="Gottschalk G."/>
            <person name="Borriss R."/>
        </authorList>
    </citation>
    <scope>NUCLEOTIDE SEQUENCE [LARGE SCALE GENOMIC DNA]</scope>
    <source>
        <strain>DSM 23117 / BGSC 10A6 / LMG 26770 / FZB42</strain>
    </source>
</reference>
<name>Y2034_BACVZ</name>
<feature type="chain" id="PRO_1000087882" description="UPF0398 protein RBAM_020340">
    <location>
        <begin position="1"/>
        <end position="182"/>
    </location>
</feature>
<dbReference type="EMBL" id="CP000560">
    <property type="protein sequence ID" value="ABS74396.1"/>
    <property type="molecule type" value="Genomic_DNA"/>
</dbReference>
<dbReference type="RefSeq" id="WP_012117830.1">
    <property type="nucleotide sequence ID" value="NC_009725.2"/>
</dbReference>
<dbReference type="SMR" id="A7Z5X0"/>
<dbReference type="GeneID" id="93081168"/>
<dbReference type="KEGG" id="bay:RBAM_020340"/>
<dbReference type="HOGENOM" id="CLU_105319_0_0_9"/>
<dbReference type="Proteomes" id="UP000001120">
    <property type="component" value="Chromosome"/>
</dbReference>
<dbReference type="Gene3D" id="3.40.50.450">
    <property type="match status" value="1"/>
</dbReference>
<dbReference type="HAMAP" id="MF_01575">
    <property type="entry name" value="UPF0398"/>
    <property type="match status" value="1"/>
</dbReference>
<dbReference type="InterPro" id="IPR010697">
    <property type="entry name" value="YspA"/>
</dbReference>
<dbReference type="NCBIfam" id="NF010181">
    <property type="entry name" value="PRK13660.1"/>
    <property type="match status" value="1"/>
</dbReference>
<dbReference type="PANTHER" id="PTHR38440:SF1">
    <property type="entry name" value="UPF0398 PROTEIN SPR0331"/>
    <property type="match status" value="1"/>
</dbReference>
<dbReference type="PANTHER" id="PTHR38440">
    <property type="entry name" value="UPF0398 PROTEIN YPSA"/>
    <property type="match status" value="1"/>
</dbReference>
<dbReference type="Pfam" id="PF06908">
    <property type="entry name" value="YpsA"/>
    <property type="match status" value="1"/>
</dbReference>
<dbReference type="PIRSF" id="PIRSF021290">
    <property type="entry name" value="DUF1273"/>
    <property type="match status" value="1"/>
</dbReference>
<dbReference type="SUPFAM" id="SSF102405">
    <property type="entry name" value="MCP/YpsA-like"/>
    <property type="match status" value="1"/>
</dbReference>
<accession>A7Z5X0</accession>